<feature type="chain" id="PRO_0000076198" description="Zinc finger protein 830">
    <location>
        <begin position="1"/>
        <end position="357"/>
    </location>
</feature>
<feature type="zinc finger region" description="C2H2-type">
    <location>
        <begin position="47"/>
        <end position="69"/>
    </location>
</feature>
<feature type="region of interest" description="Disordered" evidence="4">
    <location>
        <begin position="98"/>
        <end position="126"/>
    </location>
</feature>
<feature type="region of interest" description="Disordered" evidence="4">
    <location>
        <begin position="157"/>
        <end position="194"/>
    </location>
</feature>
<feature type="region of interest" description="Disordered" evidence="4">
    <location>
        <begin position="231"/>
        <end position="255"/>
    </location>
</feature>
<feature type="coiled-coil region" evidence="3">
    <location>
        <begin position="279"/>
        <end position="325"/>
    </location>
</feature>
<feature type="compositionally biased region" description="Basic and acidic residues" evidence="4">
    <location>
        <begin position="99"/>
        <end position="115"/>
    </location>
</feature>
<feature type="compositionally biased region" description="Acidic residues" evidence="4">
    <location>
        <begin position="157"/>
        <end position="168"/>
    </location>
</feature>
<feature type="compositionally biased region" description="Basic and acidic residues" evidence="4">
    <location>
        <begin position="242"/>
        <end position="255"/>
    </location>
</feature>
<comment type="function">
    <text evidence="1">May act as an important regulator of the cell cycle that participates in the maintenance of genome integrity.</text>
</comment>
<comment type="subcellular location">
    <subcellularLocation>
        <location evidence="1">Nucleus</location>
    </subcellularLocation>
    <subcellularLocation>
        <location evidence="1">Chromosome</location>
    </subcellularLocation>
    <subcellularLocation>
        <location evidence="1">Nucleus speckle</location>
    </subcellularLocation>
    <text evidence="1">Excluded from nucleolus.</text>
</comment>
<protein>
    <recommendedName>
        <fullName evidence="2">Zinc finger protein 830</fullName>
    </recommendedName>
    <alternativeName>
        <fullName evidence="2">Coiled-coil domain-containing protein 16</fullName>
    </alternativeName>
</protein>
<sequence>MADAGKKKLVQQEELRRLMKAKQRRSCSKKRIESPLAKYNSLGHLLCVVCNIQIKSELLWPAHILGKQHKEKVAELKGSKANISSPSNKVQLHHIMKRKGSEPENQESKRIKGTEDQPTALKTKLPEGFFETEETSSAKHAAEKAPSLKLLAGDYEDDDEVEGEEYENVNEASTSLQKPAEIPLPPPTSSADRLPADFFESKMPLVSHSGSVLKADIQEKIVERKDNTAEALPEGFFDDPEADAKVRKVDAPKDQMDKEWEEFQKEIRQVNSVSDAIVAEEDEEGRLDRQIDEIDEQIECYRRVEHLRDLKDTLQDAKMEVLKSKSSKKWQEEIGSDDEETLPSLLYKNWRDKGAFL</sequence>
<accession>Q6DJ13</accession>
<accession>Q28F24</accession>
<gene>
    <name evidence="2" type="primary">znf830</name>
    <name evidence="2" type="synonym">ccdc16</name>
    <name type="ORF">TGas069h14.1</name>
</gene>
<proteinExistence type="evidence at transcript level"/>
<organism>
    <name type="scientific">Xenopus tropicalis</name>
    <name type="common">Western clawed frog</name>
    <name type="synonym">Silurana tropicalis</name>
    <dbReference type="NCBI Taxonomy" id="8364"/>
    <lineage>
        <taxon>Eukaryota</taxon>
        <taxon>Metazoa</taxon>
        <taxon>Chordata</taxon>
        <taxon>Craniata</taxon>
        <taxon>Vertebrata</taxon>
        <taxon>Euteleostomi</taxon>
        <taxon>Amphibia</taxon>
        <taxon>Batrachia</taxon>
        <taxon>Anura</taxon>
        <taxon>Pipoidea</taxon>
        <taxon>Pipidae</taxon>
        <taxon>Xenopodinae</taxon>
        <taxon>Xenopus</taxon>
        <taxon>Silurana</taxon>
    </lineage>
</organism>
<reference key="1">
    <citation type="submission" date="2006-03" db="EMBL/GenBank/DDBJ databases">
        <authorList>
            <consortium name="Sanger Xenopus tropicalis EST/cDNA project"/>
        </authorList>
    </citation>
    <scope>NUCLEOTIDE SEQUENCE [LARGE SCALE MRNA]</scope>
    <source>
        <tissue>Gastrula</tissue>
    </source>
</reference>
<reference key="2">
    <citation type="submission" date="2004-06" db="EMBL/GenBank/DDBJ databases">
        <authorList>
            <consortium name="NIH - Xenopus Gene Collection (XGC) project"/>
        </authorList>
    </citation>
    <scope>NUCLEOTIDE SEQUENCE [LARGE SCALE MRNA]</scope>
</reference>
<keyword id="KW-0131">Cell cycle</keyword>
<keyword id="KW-0132">Cell division</keyword>
<keyword id="KW-0158">Chromosome</keyword>
<keyword id="KW-0175">Coiled coil</keyword>
<keyword id="KW-0217">Developmental protein</keyword>
<keyword id="KW-0479">Metal-binding</keyword>
<keyword id="KW-0498">Mitosis</keyword>
<keyword id="KW-0539">Nucleus</keyword>
<keyword id="KW-1185">Reference proteome</keyword>
<keyword id="KW-0862">Zinc</keyword>
<keyword id="KW-0863">Zinc-finger</keyword>
<dbReference type="EMBL" id="CR762210">
    <property type="protein sequence ID" value="CAJ81601.1"/>
    <property type="molecule type" value="mRNA"/>
</dbReference>
<dbReference type="EMBL" id="BC075372">
    <property type="protein sequence ID" value="AAH75372.1"/>
    <property type="molecule type" value="mRNA"/>
</dbReference>
<dbReference type="RefSeq" id="NP_001004918.1">
    <property type="nucleotide sequence ID" value="NM_001004918.2"/>
</dbReference>
<dbReference type="SMR" id="Q6DJ13"/>
<dbReference type="FunCoup" id="Q6DJ13">
    <property type="interactions" value="3611"/>
</dbReference>
<dbReference type="STRING" id="8364.ENSXETP00000045605"/>
<dbReference type="PaxDb" id="8364-ENSXETP00000023022"/>
<dbReference type="DNASU" id="448299"/>
<dbReference type="GeneID" id="448299"/>
<dbReference type="KEGG" id="xtr:448299"/>
<dbReference type="AGR" id="Xenbase:XB-GENE-5806791"/>
<dbReference type="CTD" id="91603"/>
<dbReference type="Xenbase" id="XB-GENE-5806791">
    <property type="gene designation" value="znf830"/>
</dbReference>
<dbReference type="eggNOG" id="KOG3032">
    <property type="taxonomic scope" value="Eukaryota"/>
</dbReference>
<dbReference type="HOGENOM" id="CLU_058140_1_0_1"/>
<dbReference type="InParanoid" id="Q6DJ13"/>
<dbReference type="OMA" id="KQPPDAQ"/>
<dbReference type="OrthoDB" id="77607at2759"/>
<dbReference type="PhylomeDB" id="Q6DJ13"/>
<dbReference type="TreeFam" id="TF315895"/>
<dbReference type="Reactome" id="R-XTR-6781823">
    <property type="pathway name" value="Formation of TC-NER Pre-Incision Complex"/>
</dbReference>
<dbReference type="Reactome" id="R-XTR-6782135">
    <property type="pathway name" value="Dual incision in TC-NER"/>
</dbReference>
<dbReference type="Reactome" id="R-XTR-6782210">
    <property type="pathway name" value="Gap-filling DNA repair synthesis and ligation in TC-NER"/>
</dbReference>
<dbReference type="Reactome" id="R-XTR-72163">
    <property type="pathway name" value="mRNA Splicing - Major Pathway"/>
</dbReference>
<dbReference type="Proteomes" id="UP000008143">
    <property type="component" value="Chromosome 6"/>
</dbReference>
<dbReference type="Bgee" id="ENSXETG00000010494">
    <property type="expression patterns" value="Expressed in ovary and 15 other cell types or tissues"/>
</dbReference>
<dbReference type="ExpressionAtlas" id="Q6DJ13">
    <property type="expression patterns" value="baseline"/>
</dbReference>
<dbReference type="GO" id="GO:0005694">
    <property type="term" value="C:chromosome"/>
    <property type="evidence" value="ECO:0007669"/>
    <property type="project" value="UniProtKB-SubCell"/>
</dbReference>
<dbReference type="GO" id="GO:0016607">
    <property type="term" value="C:nuclear speck"/>
    <property type="evidence" value="ECO:0007669"/>
    <property type="project" value="UniProtKB-SubCell"/>
</dbReference>
<dbReference type="GO" id="GO:0005681">
    <property type="term" value="C:spliceosomal complex"/>
    <property type="evidence" value="ECO:0007669"/>
    <property type="project" value="InterPro"/>
</dbReference>
<dbReference type="GO" id="GO:0003676">
    <property type="term" value="F:nucleic acid binding"/>
    <property type="evidence" value="ECO:0007669"/>
    <property type="project" value="InterPro"/>
</dbReference>
<dbReference type="GO" id="GO:0008270">
    <property type="term" value="F:zinc ion binding"/>
    <property type="evidence" value="ECO:0007669"/>
    <property type="project" value="UniProtKB-KW"/>
</dbReference>
<dbReference type="GO" id="GO:0051301">
    <property type="term" value="P:cell division"/>
    <property type="evidence" value="ECO:0007669"/>
    <property type="project" value="UniProtKB-KW"/>
</dbReference>
<dbReference type="Gene3D" id="3.30.160.60">
    <property type="entry name" value="Classic Zinc Finger"/>
    <property type="match status" value="1"/>
</dbReference>
<dbReference type="InterPro" id="IPR003604">
    <property type="entry name" value="Matrin/U1-like-C_Znf_C2H2"/>
</dbReference>
<dbReference type="InterPro" id="IPR040050">
    <property type="entry name" value="ZNF830-like"/>
</dbReference>
<dbReference type="InterPro" id="IPR022755">
    <property type="entry name" value="Znf_C2H2_jaz"/>
</dbReference>
<dbReference type="InterPro" id="IPR036236">
    <property type="entry name" value="Znf_C2H2_sf"/>
</dbReference>
<dbReference type="PANTHER" id="PTHR13278">
    <property type="entry name" value="ZINC FINGER PROTEIN 830"/>
    <property type="match status" value="1"/>
</dbReference>
<dbReference type="PANTHER" id="PTHR13278:SF0">
    <property type="entry name" value="ZINC FINGER PROTEIN 830"/>
    <property type="match status" value="1"/>
</dbReference>
<dbReference type="Pfam" id="PF12171">
    <property type="entry name" value="zf-C2H2_jaz"/>
    <property type="match status" value="1"/>
</dbReference>
<dbReference type="Pfam" id="PF23406">
    <property type="entry name" value="ZNF380_CC"/>
    <property type="match status" value="1"/>
</dbReference>
<dbReference type="SMART" id="SM00451">
    <property type="entry name" value="ZnF_U1"/>
    <property type="match status" value="1"/>
</dbReference>
<dbReference type="SUPFAM" id="SSF57667">
    <property type="entry name" value="beta-beta-alpha zinc fingers"/>
    <property type="match status" value="1"/>
</dbReference>
<dbReference type="PROSITE" id="PS00028">
    <property type="entry name" value="ZINC_FINGER_C2H2_1"/>
    <property type="match status" value="1"/>
</dbReference>
<name>ZN830_XENTR</name>
<evidence type="ECO:0000250" key="1">
    <source>
        <dbReference type="UniProtKB" id="Q8R1N0"/>
    </source>
</evidence>
<evidence type="ECO:0000250" key="2">
    <source>
        <dbReference type="UniProtKB" id="Q96NB3"/>
    </source>
</evidence>
<evidence type="ECO:0000255" key="3"/>
<evidence type="ECO:0000256" key="4">
    <source>
        <dbReference type="SAM" id="MobiDB-lite"/>
    </source>
</evidence>